<gene>
    <name type="primary">CMC17</name>
</gene>
<dbReference type="EMBL" id="M37843">
    <property type="protein sequence ID" value="AAA62796.1"/>
    <property type="molecule type" value="mRNA"/>
</dbReference>
<dbReference type="SMR" id="P21959"/>
<dbReference type="GO" id="GO:0031410">
    <property type="term" value="C:cytoplasmic vesicle"/>
    <property type="evidence" value="ECO:0007669"/>
    <property type="project" value="UniProtKB-KW"/>
</dbReference>
<dbReference type="GO" id="GO:0005886">
    <property type="term" value="C:plasma membrane"/>
    <property type="evidence" value="ECO:0007669"/>
    <property type="project" value="UniProtKB-SubCell"/>
</dbReference>
<dbReference type="GO" id="GO:0020008">
    <property type="term" value="C:rhoptry"/>
    <property type="evidence" value="ECO:0007669"/>
    <property type="project" value="UniProtKB-SubCell"/>
</dbReference>
<evidence type="ECO:0000256" key="1">
    <source>
        <dbReference type="SAM" id="MobiDB-lite"/>
    </source>
</evidence>
<feature type="chain" id="PRO_0000089882" description="EAMZP30-47 protein">
    <location>
        <begin position="1" status="less than"/>
        <end position="79" status="greater than"/>
    </location>
</feature>
<feature type="region of interest" description="Disordered" evidence="1">
    <location>
        <begin position="1"/>
        <end position="47"/>
    </location>
</feature>
<feature type="compositionally biased region" description="Low complexity" evidence="1">
    <location>
        <begin position="1"/>
        <end position="12"/>
    </location>
</feature>
<feature type="compositionally biased region" description="Basic and acidic residues" evidence="1">
    <location>
        <begin position="16"/>
        <end position="25"/>
    </location>
</feature>
<feature type="compositionally biased region" description="Low complexity" evidence="1">
    <location>
        <begin position="28"/>
        <end position="37"/>
    </location>
</feature>
<feature type="non-terminal residue">
    <location>
        <position position="1"/>
    </location>
</feature>
<feature type="non-terminal residue">
    <location>
        <position position="79"/>
    </location>
</feature>
<organism>
    <name type="scientific">Eimeria acervulina</name>
    <name type="common">Coccidian parasite</name>
    <dbReference type="NCBI Taxonomy" id="5801"/>
    <lineage>
        <taxon>Eukaryota</taxon>
        <taxon>Sar</taxon>
        <taxon>Alveolata</taxon>
        <taxon>Apicomplexa</taxon>
        <taxon>Conoidasida</taxon>
        <taxon>Coccidia</taxon>
        <taxon>Eucoccidiorida</taxon>
        <taxon>Eimeriorina</taxon>
        <taxon>Eimeriidae</taxon>
        <taxon>Eimeria</taxon>
    </lineage>
</organism>
<comment type="subcellular location">
    <subcellularLocation>
        <location>Membrane</location>
    </subcellularLocation>
    <subcellularLocation>
        <location>Cell membrane</location>
    </subcellularLocation>
    <subcellularLocation>
        <location>Cytoplasmic vesicle</location>
        <location>Secretory vesicle</location>
        <location>Rhoptry</location>
    </subcellularLocation>
    <text>Surface membrane and internal rhoptries.</text>
</comment>
<comment type="developmental stage">
    <text>Merozoite.</text>
</comment>
<protein>
    <recommendedName>
        <fullName>EAMZP30-47 protein</fullName>
    </recommendedName>
</protein>
<name>CMC17_EIMAC</name>
<reference key="1">
    <citation type="journal article" date="1990" name="Exp. Parasitol.">
        <title>Eimeria acervulina: cloning of a cDNA encoding an immunogenic region of several related merozoite surface and rhoptry proteins.</title>
        <authorList>
            <person name="Jenkins M.C."/>
            <person name="Lillehoj H.S."/>
            <person name="Barta J.R."/>
            <person name="Danforth H.D."/>
            <person name="Strohlein D.A."/>
        </authorList>
    </citation>
    <scope>NUCLEOTIDE SEQUENCE [MRNA]</scope>
</reference>
<proteinExistence type="evidence at transcript level"/>
<accession>P21959</accession>
<keyword id="KW-1003">Cell membrane</keyword>
<keyword id="KW-0968">Cytoplasmic vesicle</keyword>
<keyword id="KW-0472">Membrane</keyword>
<keyword id="KW-0477">Merozoite</keyword>
<sequence>HAASPRGRPQQRSSRHGAEGPDTTRRGSCCSSSSSCCRPSTPRHPHNHECKRQLLLLGALLGLPSNTMKYVLVQKKKKK</sequence>